<keyword id="KW-0256">Endoplasmic reticulum</keyword>
<keyword id="KW-0325">Glycoprotein</keyword>
<keyword id="KW-0328">Glycosyltransferase</keyword>
<keyword id="KW-1185">Reference proteome</keyword>
<keyword id="KW-0732">Signal</keyword>
<keyword id="KW-0808">Transferase</keyword>
<name>EOGT_DROME</name>
<accession>Q9VQB7</accession>
<feature type="signal peptide" evidence="2">
    <location>
        <begin position="1"/>
        <end position="16"/>
    </location>
</feature>
<feature type="chain" id="PRO_0000418382" description="EGF domain-specific O-linked N-acetylglucosamine transferase">
    <location>
        <begin position="17"/>
        <end position="520"/>
    </location>
</feature>
<feature type="short sequence motif" description="Required for optimal activity" evidence="1">
    <location>
        <begin position="292"/>
        <end position="294"/>
    </location>
</feature>
<feature type="short sequence motif" description="Prevents secretion from ER" evidence="3">
    <location>
        <begin position="517"/>
        <end position="520"/>
    </location>
</feature>
<feature type="glycosylation site" description="N-linked (GlcNAc...) asparagine" evidence="2">
    <location>
        <position position="52"/>
    </location>
</feature>
<feature type="glycosylation site" description="N-linked (GlcNAc...) asparagine" evidence="2">
    <location>
        <position position="176"/>
    </location>
</feature>
<feature type="glycosylation site" description="N-linked (GlcNAc...) asparagine" evidence="2">
    <location>
        <position position="250"/>
    </location>
</feature>
<feature type="glycosylation site" description="N-linked (GlcNAc...) asparagine" evidence="2">
    <location>
        <position position="479"/>
    </location>
</feature>
<organism>
    <name type="scientific">Drosophila melanogaster</name>
    <name type="common">Fruit fly</name>
    <dbReference type="NCBI Taxonomy" id="7227"/>
    <lineage>
        <taxon>Eukaryota</taxon>
        <taxon>Metazoa</taxon>
        <taxon>Ecdysozoa</taxon>
        <taxon>Arthropoda</taxon>
        <taxon>Hexapoda</taxon>
        <taxon>Insecta</taxon>
        <taxon>Pterygota</taxon>
        <taxon>Neoptera</taxon>
        <taxon>Endopterygota</taxon>
        <taxon>Diptera</taxon>
        <taxon>Brachycera</taxon>
        <taxon>Muscomorpha</taxon>
        <taxon>Ephydroidea</taxon>
        <taxon>Drosophilidae</taxon>
        <taxon>Drosophila</taxon>
        <taxon>Sophophora</taxon>
    </lineage>
</organism>
<gene>
    <name type="primary">Eogt</name>
    <name type="ORF">CG9867</name>
</gene>
<sequence length="520" mass="60083">MPILPILIGILHLSLAEDAKHLDGFSLPSLPSEHLIRYLNTFPKLKQQLPTNLTGKGTISSACWGHERDCTPAGRFQTPQCPGEHTGWARSKEAQVRTFYNQADFGYIQEQLSQLTPQCVPTYLGDSSLECTHYLRFCRGRNLLFDFRGLEQREERIRYHMDVLGPGQLLGHCKLNRTRLSGEMEHIGSALQSWGPELRNFDVLPHPVLESGLCDVVVNTPTFIMKIDATYNMYHHFCDFFNLYASLFVNQSHPAAFNTDVQILIWETYPYDSPFRDTFKAFSQRPVWTLSDVEGKRVCFKNVVLPLLPRMIFGLFYNTPIIQGCSNSGLFRAFSEFILHRLQIPYKPPQQKIRITYLSRRTKYRQVLNEDELLAPLEANDKYDVQRVSYERLPFTNQLAITRNTDILIGMHGAGLTHLLFLPNWACIFELYNCEDPNCYKDLARLRGVRYRTWEQRDLVYPQDEGHHPEGGAHAKFTNYSFDVKEFVHLVDGAAEEILSHKEFPRRASENPSKTQRNEL</sequence>
<comment type="function">
    <text evidence="4">Catalyzes the transfer of a single N-acetylglucosamine from UDP-GlcNAc to a serine or threonine residue in extracellular proteins resulting in their modification with a beta-linked N-acetylglucosamine (O-GlcNAc). Specifically glycosylates the Thr residue located between the fifth and sixth conserved cysteines of folded EGF-like domains. Involved in epithelial cell adhesion/interaction with the extracellular matrix by mediating glycosylation of proteins in the secretory pathway, such as Dumpy (Dp).</text>
</comment>
<comment type="catalytic activity">
    <reaction evidence="4">
        <text>L-seryl-[protein] + UDP-N-acetyl-alpha-D-glucosamine = 3-O-(N-acetyl-beta-D-glucosaminyl)-L-seryl-[protein] + UDP + H(+)</text>
        <dbReference type="Rhea" id="RHEA:48904"/>
        <dbReference type="Rhea" id="RHEA-COMP:9863"/>
        <dbReference type="Rhea" id="RHEA-COMP:12251"/>
        <dbReference type="ChEBI" id="CHEBI:15378"/>
        <dbReference type="ChEBI" id="CHEBI:29999"/>
        <dbReference type="ChEBI" id="CHEBI:57705"/>
        <dbReference type="ChEBI" id="CHEBI:58223"/>
        <dbReference type="ChEBI" id="CHEBI:90838"/>
        <dbReference type="EC" id="2.4.1.255"/>
    </reaction>
</comment>
<comment type="catalytic activity">
    <reaction evidence="4">
        <text>L-threonyl-[protein] + UDP-N-acetyl-alpha-D-glucosamine = 3-O-(N-acetyl-beta-D-glucosaminyl)-L-threonyl-[protein] + UDP + H(+)</text>
        <dbReference type="Rhea" id="RHEA:48908"/>
        <dbReference type="Rhea" id="RHEA-COMP:11060"/>
        <dbReference type="Rhea" id="RHEA-COMP:12252"/>
        <dbReference type="ChEBI" id="CHEBI:15378"/>
        <dbReference type="ChEBI" id="CHEBI:30013"/>
        <dbReference type="ChEBI" id="CHEBI:57705"/>
        <dbReference type="ChEBI" id="CHEBI:58223"/>
        <dbReference type="ChEBI" id="CHEBI:90840"/>
        <dbReference type="EC" id="2.4.1.255"/>
    </reaction>
</comment>
<comment type="cofactor">
    <cofactor evidence="4">
        <name>a divalent metal cation</name>
        <dbReference type="ChEBI" id="CHEBI:60240"/>
    </cofactor>
</comment>
<comment type="subcellular location">
    <subcellularLocation>
        <location evidence="3 4">Endoplasmic reticulum lumen</location>
    </subcellularLocation>
</comment>
<comment type="developmental stage">
    <text evidence="4">Expressed both maternally and zygotically. Highly expressed in preblastoderm-stage embryos. During the later stages of embryogenesis, expression is ubiquitous with the level progressively decreasing.</text>
</comment>
<comment type="disruption phenotype">
    <text evidence="4">Defects in apical extracellular matrix. Embryos show defects in the formation of the innermost layer of the apical extracellular matrix and its attachment to the epidermis. Most larvae die during second-instar or second/third-instar interface, but some survive until early third-instar. Surviving larvae display cuticle defect and irregular tracheal morphology. Ultrastructural analysis of larval epidermis reveals disruption of the deposition zone of the endocuticle, leading to separation of the epidermis from the chitin layers.</text>
</comment>
<evidence type="ECO:0000250" key="1"/>
<evidence type="ECO:0000255" key="2"/>
<evidence type="ECO:0000255" key="3">
    <source>
        <dbReference type="PROSITE-ProRule" id="PRU10138"/>
    </source>
</evidence>
<evidence type="ECO:0000269" key="4">
    <source>
    </source>
</evidence>
<dbReference type="EC" id="2.4.1.255" evidence="4"/>
<dbReference type="EMBL" id="AB675601">
    <property type="protein sequence ID" value="BAL41443.1"/>
    <property type="molecule type" value="mRNA"/>
</dbReference>
<dbReference type="EMBL" id="AE014134">
    <property type="protein sequence ID" value="AAF51259.1"/>
    <property type="molecule type" value="Genomic_DNA"/>
</dbReference>
<dbReference type="EMBL" id="AY058292">
    <property type="protein sequence ID" value="AAL13521.1"/>
    <property type="molecule type" value="mRNA"/>
</dbReference>
<dbReference type="RefSeq" id="NP_001259934.1">
    <property type="nucleotide sequence ID" value="NM_001273005.1"/>
</dbReference>
<dbReference type="RefSeq" id="NP_608678.1">
    <property type="nucleotide sequence ID" value="NM_134834.3"/>
</dbReference>
<dbReference type="SMR" id="Q9VQB7"/>
<dbReference type="BioGRID" id="59652">
    <property type="interactions" value="4"/>
</dbReference>
<dbReference type="FunCoup" id="Q9VQB7">
    <property type="interactions" value="343"/>
</dbReference>
<dbReference type="IntAct" id="Q9VQB7">
    <property type="interactions" value="1"/>
</dbReference>
<dbReference type="STRING" id="7227.FBpp0077447"/>
<dbReference type="CAZy" id="GT61">
    <property type="family name" value="Glycosyltransferase Family 61"/>
</dbReference>
<dbReference type="GlyCosmos" id="Q9VQB7">
    <property type="glycosylation" value="4 sites, No reported glycans"/>
</dbReference>
<dbReference type="GlyGen" id="Q9VQB7">
    <property type="glycosylation" value="4 sites"/>
</dbReference>
<dbReference type="PaxDb" id="7227-FBpp0077447"/>
<dbReference type="DNASU" id="33424"/>
<dbReference type="EnsemblMetazoa" id="FBtr0077767">
    <property type="protein sequence ID" value="FBpp0077447"/>
    <property type="gene ID" value="FBgn0264672"/>
</dbReference>
<dbReference type="EnsemblMetazoa" id="FBtr0330685">
    <property type="protein sequence ID" value="FBpp0303533"/>
    <property type="gene ID" value="FBgn0264672"/>
</dbReference>
<dbReference type="GeneID" id="33424"/>
<dbReference type="KEGG" id="dme:Dmel_CG9867"/>
<dbReference type="UCSC" id="CG9867-RA">
    <property type="organism name" value="d. melanogaster"/>
</dbReference>
<dbReference type="AGR" id="FB:FBgn0264672"/>
<dbReference type="CTD" id="285203"/>
<dbReference type="FlyBase" id="FBgn0264672">
    <property type="gene designation" value="Eogt"/>
</dbReference>
<dbReference type="VEuPathDB" id="VectorBase:FBgn0264672"/>
<dbReference type="eggNOG" id="KOG4698">
    <property type="taxonomic scope" value="Eukaryota"/>
</dbReference>
<dbReference type="GeneTree" id="ENSGT00940000156493"/>
<dbReference type="HOGENOM" id="CLU_039300_0_0_1"/>
<dbReference type="InParanoid" id="Q9VQB7"/>
<dbReference type="OMA" id="GHCELNR"/>
<dbReference type="OrthoDB" id="529273at2759"/>
<dbReference type="PhylomeDB" id="Q9VQB7"/>
<dbReference type="BRENDA" id="2.4.1.255">
    <property type="organism ID" value="1994"/>
</dbReference>
<dbReference type="SignaLink" id="Q9VQB7"/>
<dbReference type="BioGRID-ORCS" id="33424">
    <property type="hits" value="0 hits in 1 CRISPR screen"/>
</dbReference>
<dbReference type="GenomeRNAi" id="33424"/>
<dbReference type="PRO" id="PR:Q9VQB7"/>
<dbReference type="Proteomes" id="UP000000803">
    <property type="component" value="Chromosome 2L"/>
</dbReference>
<dbReference type="Bgee" id="FBgn0264672">
    <property type="expression patterns" value="Expressed in wing disc and 66 other cell types or tissues"/>
</dbReference>
<dbReference type="ExpressionAtlas" id="Q9VQB7">
    <property type="expression patterns" value="baseline and differential"/>
</dbReference>
<dbReference type="GO" id="GO:0005788">
    <property type="term" value="C:endoplasmic reticulum lumen"/>
    <property type="evidence" value="ECO:0000314"/>
    <property type="project" value="UniProtKB"/>
</dbReference>
<dbReference type="GO" id="GO:0097363">
    <property type="term" value="F:protein O-acetylglucosaminyltransferase activity"/>
    <property type="evidence" value="ECO:0000314"/>
    <property type="project" value="FlyBase"/>
</dbReference>
<dbReference type="GO" id="GO:0008363">
    <property type="term" value="P:larval chitin-based cuticle development"/>
    <property type="evidence" value="ECO:0000315"/>
    <property type="project" value="FlyBase"/>
</dbReference>
<dbReference type="GO" id="GO:0097370">
    <property type="term" value="P:protein O-GlcNAcylation via threonine"/>
    <property type="evidence" value="ECO:0000315"/>
    <property type="project" value="FlyBase"/>
</dbReference>
<dbReference type="GO" id="GO:0006493">
    <property type="term" value="P:protein O-linked glycosylation"/>
    <property type="evidence" value="ECO:0000314"/>
    <property type="project" value="UniProtKB"/>
</dbReference>
<dbReference type="InterPro" id="IPR049625">
    <property type="entry name" value="Glyco_transf_61_cat"/>
</dbReference>
<dbReference type="InterPro" id="IPR007657">
    <property type="entry name" value="Glycosyltransferase_61"/>
</dbReference>
<dbReference type="PANTHER" id="PTHR20961:SF148">
    <property type="entry name" value="EGF DOMAIN-SPECIFIC O-LINKED N-ACETYLGLUCOSAMINE TRANSFERASE"/>
    <property type="match status" value="1"/>
</dbReference>
<dbReference type="PANTHER" id="PTHR20961">
    <property type="entry name" value="GLYCOSYLTRANSFERASE"/>
    <property type="match status" value="1"/>
</dbReference>
<dbReference type="Pfam" id="PF04577">
    <property type="entry name" value="Glyco_transf_61"/>
    <property type="match status" value="1"/>
</dbReference>
<dbReference type="PROSITE" id="PS00014">
    <property type="entry name" value="ER_TARGET"/>
    <property type="match status" value="1"/>
</dbReference>
<proteinExistence type="evidence at protein level"/>
<reference key="1">
    <citation type="journal article" date="2011" name="Nat. Commun.">
        <title>O-Linked-N-acetylglucosamine on extracellular protein domains mediates epithelial cell-matrix interactions.</title>
        <authorList>
            <person name="Sakaidani Y."/>
            <person name="Nomura T."/>
            <person name="Matsuura A."/>
            <person name="Ito M."/>
            <person name="Suzuki E."/>
            <person name="Murakami K."/>
            <person name="Nadano D."/>
            <person name="Matsuda T."/>
            <person name="Furukawa K."/>
            <person name="Okajima T."/>
        </authorList>
    </citation>
    <scope>NUCLEOTIDE SEQUENCE [MRNA]</scope>
    <scope>FUNCTION</scope>
    <scope>CATALYTIC ACTIVITY</scope>
    <scope>COFACTOR</scope>
    <scope>SUBCELLULAR LOCATION</scope>
    <scope>DEVELOPMENTAL STAGE</scope>
    <scope>DISRUPTION PHENOTYPE</scope>
</reference>
<reference key="2">
    <citation type="journal article" date="2000" name="Science">
        <title>The genome sequence of Drosophila melanogaster.</title>
        <authorList>
            <person name="Adams M.D."/>
            <person name="Celniker S.E."/>
            <person name="Holt R.A."/>
            <person name="Evans C.A."/>
            <person name="Gocayne J.D."/>
            <person name="Amanatides P.G."/>
            <person name="Scherer S.E."/>
            <person name="Li P.W."/>
            <person name="Hoskins R.A."/>
            <person name="Galle R.F."/>
            <person name="George R.A."/>
            <person name="Lewis S.E."/>
            <person name="Richards S."/>
            <person name="Ashburner M."/>
            <person name="Henderson S.N."/>
            <person name="Sutton G.G."/>
            <person name="Wortman J.R."/>
            <person name="Yandell M.D."/>
            <person name="Zhang Q."/>
            <person name="Chen L.X."/>
            <person name="Brandon R.C."/>
            <person name="Rogers Y.-H.C."/>
            <person name="Blazej R.G."/>
            <person name="Champe M."/>
            <person name="Pfeiffer B.D."/>
            <person name="Wan K.H."/>
            <person name="Doyle C."/>
            <person name="Baxter E.G."/>
            <person name="Helt G."/>
            <person name="Nelson C.R."/>
            <person name="Miklos G.L.G."/>
            <person name="Abril J.F."/>
            <person name="Agbayani A."/>
            <person name="An H.-J."/>
            <person name="Andrews-Pfannkoch C."/>
            <person name="Baldwin D."/>
            <person name="Ballew R.M."/>
            <person name="Basu A."/>
            <person name="Baxendale J."/>
            <person name="Bayraktaroglu L."/>
            <person name="Beasley E.M."/>
            <person name="Beeson K.Y."/>
            <person name="Benos P.V."/>
            <person name="Berman B.P."/>
            <person name="Bhandari D."/>
            <person name="Bolshakov S."/>
            <person name="Borkova D."/>
            <person name="Botchan M.R."/>
            <person name="Bouck J."/>
            <person name="Brokstein P."/>
            <person name="Brottier P."/>
            <person name="Burtis K.C."/>
            <person name="Busam D.A."/>
            <person name="Butler H."/>
            <person name="Cadieu E."/>
            <person name="Center A."/>
            <person name="Chandra I."/>
            <person name="Cherry J.M."/>
            <person name="Cawley S."/>
            <person name="Dahlke C."/>
            <person name="Davenport L.B."/>
            <person name="Davies P."/>
            <person name="de Pablos B."/>
            <person name="Delcher A."/>
            <person name="Deng Z."/>
            <person name="Mays A.D."/>
            <person name="Dew I."/>
            <person name="Dietz S.M."/>
            <person name="Dodson K."/>
            <person name="Doup L.E."/>
            <person name="Downes M."/>
            <person name="Dugan-Rocha S."/>
            <person name="Dunkov B.C."/>
            <person name="Dunn P."/>
            <person name="Durbin K.J."/>
            <person name="Evangelista C.C."/>
            <person name="Ferraz C."/>
            <person name="Ferriera S."/>
            <person name="Fleischmann W."/>
            <person name="Fosler C."/>
            <person name="Gabrielian A.E."/>
            <person name="Garg N.S."/>
            <person name="Gelbart W.M."/>
            <person name="Glasser K."/>
            <person name="Glodek A."/>
            <person name="Gong F."/>
            <person name="Gorrell J.H."/>
            <person name="Gu Z."/>
            <person name="Guan P."/>
            <person name="Harris M."/>
            <person name="Harris N.L."/>
            <person name="Harvey D.A."/>
            <person name="Heiman T.J."/>
            <person name="Hernandez J.R."/>
            <person name="Houck J."/>
            <person name="Hostin D."/>
            <person name="Houston K.A."/>
            <person name="Howland T.J."/>
            <person name="Wei M.-H."/>
            <person name="Ibegwam C."/>
            <person name="Jalali M."/>
            <person name="Kalush F."/>
            <person name="Karpen G.H."/>
            <person name="Ke Z."/>
            <person name="Kennison J.A."/>
            <person name="Ketchum K.A."/>
            <person name="Kimmel B.E."/>
            <person name="Kodira C.D."/>
            <person name="Kraft C.L."/>
            <person name="Kravitz S."/>
            <person name="Kulp D."/>
            <person name="Lai Z."/>
            <person name="Lasko P."/>
            <person name="Lei Y."/>
            <person name="Levitsky A.A."/>
            <person name="Li J.H."/>
            <person name="Li Z."/>
            <person name="Liang Y."/>
            <person name="Lin X."/>
            <person name="Liu X."/>
            <person name="Mattei B."/>
            <person name="McIntosh T.C."/>
            <person name="McLeod M.P."/>
            <person name="McPherson D."/>
            <person name="Merkulov G."/>
            <person name="Milshina N.V."/>
            <person name="Mobarry C."/>
            <person name="Morris J."/>
            <person name="Moshrefi A."/>
            <person name="Mount S.M."/>
            <person name="Moy M."/>
            <person name="Murphy B."/>
            <person name="Murphy L."/>
            <person name="Muzny D.M."/>
            <person name="Nelson D.L."/>
            <person name="Nelson D.R."/>
            <person name="Nelson K.A."/>
            <person name="Nixon K."/>
            <person name="Nusskern D.R."/>
            <person name="Pacleb J.M."/>
            <person name="Palazzolo M."/>
            <person name="Pittman G.S."/>
            <person name="Pan S."/>
            <person name="Pollard J."/>
            <person name="Puri V."/>
            <person name="Reese M.G."/>
            <person name="Reinert K."/>
            <person name="Remington K."/>
            <person name="Saunders R.D.C."/>
            <person name="Scheeler F."/>
            <person name="Shen H."/>
            <person name="Shue B.C."/>
            <person name="Siden-Kiamos I."/>
            <person name="Simpson M."/>
            <person name="Skupski M.P."/>
            <person name="Smith T.J."/>
            <person name="Spier E."/>
            <person name="Spradling A.C."/>
            <person name="Stapleton M."/>
            <person name="Strong R."/>
            <person name="Sun E."/>
            <person name="Svirskas R."/>
            <person name="Tector C."/>
            <person name="Turner R."/>
            <person name="Venter E."/>
            <person name="Wang A.H."/>
            <person name="Wang X."/>
            <person name="Wang Z.-Y."/>
            <person name="Wassarman D.A."/>
            <person name="Weinstock G.M."/>
            <person name="Weissenbach J."/>
            <person name="Williams S.M."/>
            <person name="Woodage T."/>
            <person name="Worley K.C."/>
            <person name="Wu D."/>
            <person name="Yang S."/>
            <person name="Yao Q.A."/>
            <person name="Ye J."/>
            <person name="Yeh R.-F."/>
            <person name="Zaveri J.S."/>
            <person name="Zhan M."/>
            <person name="Zhang G."/>
            <person name="Zhao Q."/>
            <person name="Zheng L."/>
            <person name="Zheng X.H."/>
            <person name="Zhong F.N."/>
            <person name="Zhong W."/>
            <person name="Zhou X."/>
            <person name="Zhu S.C."/>
            <person name="Zhu X."/>
            <person name="Smith H.O."/>
            <person name="Gibbs R.A."/>
            <person name="Myers E.W."/>
            <person name="Rubin G.M."/>
            <person name="Venter J.C."/>
        </authorList>
    </citation>
    <scope>NUCLEOTIDE SEQUENCE [LARGE SCALE GENOMIC DNA]</scope>
    <source>
        <strain>Berkeley</strain>
    </source>
</reference>
<reference key="3">
    <citation type="journal article" date="2002" name="Genome Biol.">
        <title>Annotation of the Drosophila melanogaster euchromatic genome: a systematic review.</title>
        <authorList>
            <person name="Misra S."/>
            <person name="Crosby M.A."/>
            <person name="Mungall C.J."/>
            <person name="Matthews B.B."/>
            <person name="Campbell K.S."/>
            <person name="Hradecky P."/>
            <person name="Huang Y."/>
            <person name="Kaminker J.S."/>
            <person name="Millburn G.H."/>
            <person name="Prochnik S.E."/>
            <person name="Smith C.D."/>
            <person name="Tupy J.L."/>
            <person name="Whitfield E.J."/>
            <person name="Bayraktaroglu L."/>
            <person name="Berman B.P."/>
            <person name="Bettencourt B.R."/>
            <person name="Celniker S.E."/>
            <person name="de Grey A.D.N.J."/>
            <person name="Drysdale R.A."/>
            <person name="Harris N.L."/>
            <person name="Richter J."/>
            <person name="Russo S."/>
            <person name="Schroeder A.J."/>
            <person name="Shu S.Q."/>
            <person name="Stapleton M."/>
            <person name="Yamada C."/>
            <person name="Ashburner M."/>
            <person name="Gelbart W.M."/>
            <person name="Rubin G.M."/>
            <person name="Lewis S.E."/>
        </authorList>
    </citation>
    <scope>GENOME REANNOTATION</scope>
    <source>
        <strain>Berkeley</strain>
    </source>
</reference>
<reference key="4">
    <citation type="journal article" date="2002" name="Genome Biol.">
        <title>A Drosophila full-length cDNA resource.</title>
        <authorList>
            <person name="Stapleton M."/>
            <person name="Carlson J.W."/>
            <person name="Brokstein P."/>
            <person name="Yu C."/>
            <person name="Champe M."/>
            <person name="George R.A."/>
            <person name="Guarin H."/>
            <person name="Kronmiller B."/>
            <person name="Pacleb J.M."/>
            <person name="Park S."/>
            <person name="Wan K.H."/>
            <person name="Rubin G.M."/>
            <person name="Celniker S.E."/>
        </authorList>
    </citation>
    <scope>NUCLEOTIDE SEQUENCE [LARGE SCALE MRNA]</scope>
    <source>
        <strain>Berkeley</strain>
        <tissue>Head</tissue>
    </source>
</reference>
<protein>
    <recommendedName>
        <fullName>EGF domain-specific O-linked N-acetylglucosamine transferase</fullName>
        <ecNumber evidence="4">2.4.1.255</ecNumber>
    </recommendedName>
    <alternativeName>
        <fullName>Extracellular O-linked N-acetylglucosamine transferase</fullName>
    </alternativeName>
</protein>